<dbReference type="EC" id="3.1.1.26" evidence="2"/>
<dbReference type="EC" id="3.1.1.3" evidence="2"/>
<dbReference type="EMBL" id="BC142351">
    <property type="protein sequence ID" value="AAI42352.1"/>
    <property type="molecule type" value="mRNA"/>
</dbReference>
<dbReference type="RefSeq" id="NP_001098825.1">
    <property type="nucleotide sequence ID" value="NM_001105355.2"/>
</dbReference>
<dbReference type="SMR" id="A5PK46"/>
<dbReference type="FunCoup" id="A5PK46">
    <property type="interactions" value="57"/>
</dbReference>
<dbReference type="STRING" id="9913.ENSBTAP00000015106"/>
<dbReference type="ESTHER" id="bovin-lipr2">
    <property type="family name" value="Pancreatic_lipase"/>
</dbReference>
<dbReference type="GlyCosmos" id="A5PK46">
    <property type="glycosylation" value="4 sites, No reported glycans"/>
</dbReference>
<dbReference type="GlyGen" id="A5PK46">
    <property type="glycosylation" value="4 sites"/>
</dbReference>
<dbReference type="GeneID" id="510772"/>
<dbReference type="KEGG" id="bta:510772"/>
<dbReference type="CTD" id="5408"/>
<dbReference type="VEuPathDB" id="HostDB:ENSBTAG00000000765"/>
<dbReference type="InParanoid" id="A5PK46"/>
<dbReference type="OMA" id="CYRPLGC"/>
<dbReference type="OrthoDB" id="199913at2759"/>
<dbReference type="Reactome" id="R-BTA-192456">
    <property type="pathway name" value="Digestion of dietary lipid"/>
</dbReference>
<dbReference type="UniPathway" id="UPA00256"/>
<dbReference type="Proteomes" id="UP000009136">
    <property type="component" value="Chromosome 26"/>
</dbReference>
<dbReference type="Bgee" id="ENSBTAG00000000765">
    <property type="expression patterns" value="Expressed in urinary bladder and 21 other cell types or tissues"/>
</dbReference>
<dbReference type="GO" id="GO:0005615">
    <property type="term" value="C:extracellular space"/>
    <property type="evidence" value="ECO:0000250"/>
    <property type="project" value="UniProtKB"/>
</dbReference>
<dbReference type="GO" id="GO:0043005">
    <property type="term" value="C:neuron projection"/>
    <property type="evidence" value="ECO:0000250"/>
    <property type="project" value="UniProtKB"/>
</dbReference>
<dbReference type="GO" id="GO:0042589">
    <property type="term" value="C:zymogen granule membrane"/>
    <property type="evidence" value="ECO:0007669"/>
    <property type="project" value="UniProtKB-SubCell"/>
</dbReference>
<dbReference type="GO" id="GO:0005509">
    <property type="term" value="F:calcium ion binding"/>
    <property type="evidence" value="ECO:0000250"/>
    <property type="project" value="UniProtKB"/>
</dbReference>
<dbReference type="GO" id="GO:0047714">
    <property type="term" value="F:galactolipase activity"/>
    <property type="evidence" value="ECO:0000250"/>
    <property type="project" value="UniProtKB"/>
</dbReference>
<dbReference type="GO" id="GO:0004465">
    <property type="term" value="F:lipoprotein lipase activity"/>
    <property type="evidence" value="ECO:0000318"/>
    <property type="project" value="GO_Central"/>
</dbReference>
<dbReference type="GO" id="GO:0047372">
    <property type="term" value="F:monoacylglycerol lipase activity"/>
    <property type="evidence" value="ECO:0000250"/>
    <property type="project" value="UniProtKB"/>
</dbReference>
<dbReference type="GO" id="GO:0008970">
    <property type="term" value="F:phospholipase A1 activity"/>
    <property type="evidence" value="ECO:0000318"/>
    <property type="project" value="GO_Central"/>
</dbReference>
<dbReference type="GO" id="GO:0004620">
    <property type="term" value="F:phospholipase activity"/>
    <property type="evidence" value="ECO:0000250"/>
    <property type="project" value="UniProtKB"/>
</dbReference>
<dbReference type="GO" id="GO:0004806">
    <property type="term" value="F:triacylglycerol lipase activity"/>
    <property type="evidence" value="ECO:0000250"/>
    <property type="project" value="UniProtKB"/>
</dbReference>
<dbReference type="GO" id="GO:0042632">
    <property type="term" value="P:cholesterol homeostasis"/>
    <property type="evidence" value="ECO:0000318"/>
    <property type="project" value="GO_Central"/>
</dbReference>
<dbReference type="GO" id="GO:0006633">
    <property type="term" value="P:fatty acid biosynthetic process"/>
    <property type="evidence" value="ECO:0000318"/>
    <property type="project" value="GO_Central"/>
</dbReference>
<dbReference type="GO" id="GO:0019376">
    <property type="term" value="P:galactolipid catabolic process"/>
    <property type="evidence" value="ECO:0000250"/>
    <property type="project" value="UniProtKB"/>
</dbReference>
<dbReference type="GO" id="GO:0034375">
    <property type="term" value="P:high-density lipoprotein particle remodeling"/>
    <property type="evidence" value="ECO:0000318"/>
    <property type="project" value="GO_Central"/>
</dbReference>
<dbReference type="GO" id="GO:0009395">
    <property type="term" value="P:phospholipid catabolic process"/>
    <property type="evidence" value="ECO:0000250"/>
    <property type="project" value="UniProtKB"/>
</dbReference>
<dbReference type="GO" id="GO:0006644">
    <property type="term" value="P:phospholipid metabolic process"/>
    <property type="evidence" value="ECO:0000250"/>
    <property type="project" value="UniProtKB"/>
</dbReference>
<dbReference type="GO" id="GO:0019433">
    <property type="term" value="P:triglyceride catabolic process"/>
    <property type="evidence" value="ECO:0000318"/>
    <property type="project" value="GO_Central"/>
</dbReference>
<dbReference type="CDD" id="cd00707">
    <property type="entry name" value="Pancreat_lipase_like"/>
    <property type="match status" value="1"/>
</dbReference>
<dbReference type="CDD" id="cd01759">
    <property type="entry name" value="PLAT_PL"/>
    <property type="match status" value="1"/>
</dbReference>
<dbReference type="FunFam" id="3.40.50.1820:FF:000033">
    <property type="entry name" value="Pancreatic triacylglycerol lipase"/>
    <property type="match status" value="1"/>
</dbReference>
<dbReference type="FunFam" id="2.60.60.20:FF:000003">
    <property type="entry name" value="Triacylglycerol lipase"/>
    <property type="match status" value="1"/>
</dbReference>
<dbReference type="Gene3D" id="3.40.50.1820">
    <property type="entry name" value="alpha/beta hydrolase"/>
    <property type="match status" value="1"/>
</dbReference>
<dbReference type="Gene3D" id="2.60.60.20">
    <property type="entry name" value="PLAT/LH2 domain"/>
    <property type="match status" value="1"/>
</dbReference>
<dbReference type="InterPro" id="IPR029058">
    <property type="entry name" value="AB_hydrolase_fold"/>
</dbReference>
<dbReference type="InterPro" id="IPR013818">
    <property type="entry name" value="Lipase"/>
</dbReference>
<dbReference type="InterPro" id="IPR016272">
    <property type="entry name" value="Lipase_LIPH"/>
</dbReference>
<dbReference type="InterPro" id="IPR033906">
    <property type="entry name" value="Lipase_N"/>
</dbReference>
<dbReference type="InterPro" id="IPR002331">
    <property type="entry name" value="Lipase_panc"/>
</dbReference>
<dbReference type="InterPro" id="IPR001024">
    <property type="entry name" value="PLAT/LH2_dom"/>
</dbReference>
<dbReference type="InterPro" id="IPR036392">
    <property type="entry name" value="PLAT/LH2_dom_sf"/>
</dbReference>
<dbReference type="InterPro" id="IPR000734">
    <property type="entry name" value="TAG_lipase"/>
</dbReference>
<dbReference type="PANTHER" id="PTHR11610">
    <property type="entry name" value="LIPASE"/>
    <property type="match status" value="1"/>
</dbReference>
<dbReference type="PANTHER" id="PTHR11610:SF165">
    <property type="entry name" value="PANCREATIC LIPASE-RELATED PROTEIN 2"/>
    <property type="match status" value="1"/>
</dbReference>
<dbReference type="Pfam" id="PF00151">
    <property type="entry name" value="Lipase"/>
    <property type="match status" value="1"/>
</dbReference>
<dbReference type="Pfam" id="PF01477">
    <property type="entry name" value="PLAT"/>
    <property type="match status" value="1"/>
</dbReference>
<dbReference type="PIRSF" id="PIRSF000865">
    <property type="entry name" value="Lipoprotein_lipase_LIPH"/>
    <property type="match status" value="1"/>
</dbReference>
<dbReference type="PRINTS" id="PR00823">
    <property type="entry name" value="PANCLIPASE"/>
</dbReference>
<dbReference type="PRINTS" id="PR00821">
    <property type="entry name" value="TAGLIPASE"/>
</dbReference>
<dbReference type="SMART" id="SM00308">
    <property type="entry name" value="LH2"/>
    <property type="match status" value="1"/>
</dbReference>
<dbReference type="SUPFAM" id="SSF53474">
    <property type="entry name" value="alpha/beta-Hydrolases"/>
    <property type="match status" value="1"/>
</dbReference>
<dbReference type="SUPFAM" id="SSF49723">
    <property type="entry name" value="Lipase/lipooxygenase domain (PLAT/LH2 domain)"/>
    <property type="match status" value="1"/>
</dbReference>
<dbReference type="PROSITE" id="PS00120">
    <property type="entry name" value="LIPASE_SER"/>
    <property type="match status" value="1"/>
</dbReference>
<dbReference type="PROSITE" id="PS50095">
    <property type="entry name" value="PLAT"/>
    <property type="match status" value="1"/>
</dbReference>
<protein>
    <recommendedName>
        <fullName evidence="2">Pancreatic lipase-related protein 2</fullName>
        <shortName evidence="2">PL-RP2</shortName>
    </recommendedName>
    <alternativeName>
        <fullName evidence="1">Cytotoxic T lymphocyte lipase</fullName>
    </alternativeName>
    <alternativeName>
        <fullName>Galactolipase</fullName>
        <ecNumber evidence="2">3.1.1.26</ecNumber>
    </alternativeName>
    <alternativeName>
        <fullName>Triacylglycerol lipase</fullName>
        <ecNumber evidence="2">3.1.1.3</ecNumber>
    </alternativeName>
</protein>
<accession>A5PK46</accession>
<sequence length="469" mass="52193">MLPSWTIGLLLLATVRGKEICYEPFGCFSDEKPWTGILQRPLKLFPWSPEDIDAHFLLYTNENPNNYQRINITDLATVRASNFQLDRKTRFVIHGFIDDGDSGWPTDLCKKMFKVEKVNCICVDWEHGAWTKYTQAVHNTRVVGAEIAFFIQGLSTELGYGPENVHLIGHSLGAQLAAEAGRRLGGQVGRITGLDPAQPCFEGTPEEVRLDPSDAMFVDVIHTDSASIIPFLSLGIRQKVGHLDFYPNGGKEMPGCQKNILSTIIDINGIWQGIQDFVACSHLRSYKYYSSSILNPDGFLGYPCASYEEFQEGGCFPCPAGGCPKMGHYADQFQGKTSAVGQTFFLNTGSSGNFTSWRYRVSVTLAGTKKVRGSIRIALYGSNGNSKQYQIFKGSLQPNASHTHDIDVDLNVGKVQKVKFLWNNNVINLFWPKLGASRVTVQGGEDRTEYNFCSNDTMRENALQTLYPC</sequence>
<name>LIPR2_BOVIN</name>
<comment type="function">
    <text evidence="1 2 3">Lipase that primarily hydrolyzes triglycerides and galactosylglycerides. In neonates, may play a major role in pancreatic digestion of dietary fats such as milk fat globules enriched in long-chain triglycerides. Hydrolyzes short-, medium- and long-chain fatty acyls in triglycerides without apparent positional specificity. Can completely deacylate triacylglycerols. When the liver matures and bile salt synthesis increases, likely functions mainly as a galactolipase and monoacylglycerol lipase. Hydrolyzes monogalactosyldiglycerols (MGDG) and digalactosyldiacylglycerols (DGDG) present in a plant-based diet, releasing long-chain polyunsaturated fatty acids. Hydrolyzes medium- and long-chain fatty acyls in galactolipids. May act together with LIPF to hydrolyze partially digested triglycerides. Hydrolyzes long-chain monoglycerides with high efficiency (By similarity). In cytotoxic T cells, contributes to perforin-dependent cell lysis, but is unlikely to mediate direct cytotoxicity (By similarity). Also has low phospholipase activity (By similarity). In neurons, required for the localization of the phospholipid 1-oleoyl-2-palmitoyl-PC (OPPC) to neurite tips through acyl chain remodeling of membrane phospholipids (By similarity). The resulting OPPC-rich lipid membrane domain recruits the t-SNARE protein STX4 by selectively interacting with the STX4 transmembrane domain and this promotes surface expression of the dopamine transporter SLC6A3/DAT at neurite tips by facilitating fusion of SLC6A3-containing transport vesicles with the plasma membrane (By similarity).</text>
</comment>
<comment type="catalytic activity">
    <reaction evidence="2">
        <text>a triacylglycerol + H2O = a diacylglycerol + a fatty acid + H(+)</text>
        <dbReference type="Rhea" id="RHEA:12044"/>
        <dbReference type="ChEBI" id="CHEBI:15377"/>
        <dbReference type="ChEBI" id="CHEBI:15378"/>
        <dbReference type="ChEBI" id="CHEBI:17855"/>
        <dbReference type="ChEBI" id="CHEBI:18035"/>
        <dbReference type="ChEBI" id="CHEBI:28868"/>
        <dbReference type="EC" id="3.1.1.3"/>
    </reaction>
    <physiologicalReaction direction="left-to-right" evidence="2">
        <dbReference type="Rhea" id="RHEA:12045"/>
    </physiologicalReaction>
</comment>
<comment type="catalytic activity">
    <reaction evidence="2">
        <text>a 1,2-diacyl-3-O-(beta-D-galactosyl)-sn-glycerol + 2 H2O = 3-beta-D-galactosyl-sn-glycerol + 2 a fatty acid + 2 H(+)</text>
        <dbReference type="Rhea" id="RHEA:13189"/>
        <dbReference type="ChEBI" id="CHEBI:15377"/>
        <dbReference type="ChEBI" id="CHEBI:15378"/>
        <dbReference type="ChEBI" id="CHEBI:15754"/>
        <dbReference type="ChEBI" id="CHEBI:17615"/>
        <dbReference type="ChEBI" id="CHEBI:28868"/>
        <dbReference type="EC" id="3.1.1.26"/>
    </reaction>
    <physiologicalReaction direction="left-to-right" evidence="2">
        <dbReference type="Rhea" id="RHEA:13190"/>
    </physiologicalReaction>
</comment>
<comment type="catalytic activity">
    <reaction evidence="2">
        <text>1,2,3-tri-(9Z-octadecenoyl)-glycerol + H2O = di-(9Z)-octadecenoylglycerol + (9Z)-octadecenoate + H(+)</text>
        <dbReference type="Rhea" id="RHEA:38575"/>
        <dbReference type="ChEBI" id="CHEBI:15377"/>
        <dbReference type="ChEBI" id="CHEBI:15378"/>
        <dbReference type="ChEBI" id="CHEBI:30823"/>
        <dbReference type="ChEBI" id="CHEBI:53753"/>
        <dbReference type="ChEBI" id="CHEBI:75945"/>
    </reaction>
    <physiologicalReaction direction="left-to-right" evidence="2">
        <dbReference type="Rhea" id="RHEA:38576"/>
    </physiologicalReaction>
</comment>
<comment type="catalytic activity">
    <reaction evidence="2">
        <text>di-(9Z)-octadecenoylglycerol + H2O = (9Z-octadecenoyl)-glycerol + (9Z)-octadecenoate + H(+)</text>
        <dbReference type="Rhea" id="RHEA:47868"/>
        <dbReference type="ChEBI" id="CHEBI:15377"/>
        <dbReference type="ChEBI" id="CHEBI:15378"/>
        <dbReference type="ChEBI" id="CHEBI:30823"/>
        <dbReference type="ChEBI" id="CHEBI:75937"/>
        <dbReference type="ChEBI" id="CHEBI:75945"/>
    </reaction>
    <physiologicalReaction direction="left-to-right" evidence="2">
        <dbReference type="Rhea" id="RHEA:47869"/>
    </physiologicalReaction>
</comment>
<comment type="catalytic activity">
    <reaction evidence="2">
        <text>(9Z-octadecenoyl)-glycerol + H2O = glycerol + (9Z)-octadecenoate + H(+)</text>
        <dbReference type="Rhea" id="RHEA:39955"/>
        <dbReference type="ChEBI" id="CHEBI:15377"/>
        <dbReference type="ChEBI" id="CHEBI:15378"/>
        <dbReference type="ChEBI" id="CHEBI:17754"/>
        <dbReference type="ChEBI" id="CHEBI:30823"/>
        <dbReference type="ChEBI" id="CHEBI:75937"/>
    </reaction>
    <physiologicalReaction direction="left-to-right" evidence="2">
        <dbReference type="Rhea" id="RHEA:39956"/>
    </physiologicalReaction>
</comment>
<comment type="catalytic activity">
    <reaction evidence="2">
        <text>1-(9Z-octadecenoyl)-glycerol + H2O = glycerol + (9Z)-octadecenoate + H(+)</text>
        <dbReference type="Rhea" id="RHEA:38487"/>
        <dbReference type="ChEBI" id="CHEBI:15377"/>
        <dbReference type="ChEBI" id="CHEBI:15378"/>
        <dbReference type="ChEBI" id="CHEBI:17754"/>
        <dbReference type="ChEBI" id="CHEBI:30823"/>
        <dbReference type="ChEBI" id="CHEBI:75342"/>
    </reaction>
    <physiologicalReaction direction="left-to-right" evidence="2">
        <dbReference type="Rhea" id="RHEA:38488"/>
    </physiologicalReaction>
</comment>
<comment type="catalytic activity">
    <reaction evidence="2">
        <text>1,2,3-tripropanoylglycerol + H2O = dipropanoylglycerol + propanoate + H(+)</text>
        <dbReference type="Rhea" id="RHEA:48024"/>
        <dbReference type="ChEBI" id="CHEBI:15377"/>
        <dbReference type="ChEBI" id="CHEBI:15378"/>
        <dbReference type="ChEBI" id="CHEBI:17272"/>
        <dbReference type="ChEBI" id="CHEBI:88153"/>
        <dbReference type="ChEBI" id="CHEBI:88155"/>
    </reaction>
    <physiologicalReaction direction="left-to-right" evidence="2">
        <dbReference type="Rhea" id="RHEA:48025"/>
    </physiologicalReaction>
</comment>
<comment type="catalytic activity">
    <reaction evidence="2">
        <text>1,2,3-tributanoylglycerol + H2O = dibutanoylglycerol + butanoate + H(+)</text>
        <dbReference type="Rhea" id="RHEA:40475"/>
        <dbReference type="ChEBI" id="CHEBI:15377"/>
        <dbReference type="ChEBI" id="CHEBI:15378"/>
        <dbReference type="ChEBI" id="CHEBI:17968"/>
        <dbReference type="ChEBI" id="CHEBI:35020"/>
        <dbReference type="ChEBI" id="CHEBI:76478"/>
    </reaction>
    <physiologicalReaction direction="left-to-right" evidence="2">
        <dbReference type="Rhea" id="RHEA:40476"/>
    </physiologicalReaction>
</comment>
<comment type="catalytic activity">
    <reaction evidence="2">
        <text>1,2,3-trioctanoylglycerol + H2O = dioctanoylglycerol + octanoate + H(+)</text>
        <dbReference type="Rhea" id="RHEA:47864"/>
        <dbReference type="ChEBI" id="CHEBI:15377"/>
        <dbReference type="ChEBI" id="CHEBI:15378"/>
        <dbReference type="ChEBI" id="CHEBI:25646"/>
        <dbReference type="ChEBI" id="CHEBI:76978"/>
        <dbReference type="ChEBI" id="CHEBI:88066"/>
    </reaction>
    <physiologicalReaction direction="left-to-right" evidence="2">
        <dbReference type="Rhea" id="RHEA:47865"/>
    </physiologicalReaction>
</comment>
<comment type="catalytic activity">
    <reaction evidence="2">
        <text>1,2-didecanoylglycerol + H2O = decanoylglycerol + decanoate + H(+)</text>
        <dbReference type="Rhea" id="RHEA:48596"/>
        <dbReference type="ChEBI" id="CHEBI:11152"/>
        <dbReference type="ChEBI" id="CHEBI:15377"/>
        <dbReference type="ChEBI" id="CHEBI:15378"/>
        <dbReference type="ChEBI" id="CHEBI:27689"/>
        <dbReference type="ChEBI" id="CHEBI:90605"/>
    </reaction>
    <physiologicalReaction direction="left-to-right" evidence="2">
        <dbReference type="Rhea" id="RHEA:48597"/>
    </physiologicalReaction>
</comment>
<comment type="catalytic activity">
    <reaction evidence="2">
        <text>long chain 1,2-diacyl-3-O-beta-D-galactosyl-sn-glycerol + H2O = long chain acyl-3-O-beta-D-galactosyl-sn-glycerol + a fatty acid + H(+)</text>
        <dbReference type="Rhea" id="RHEA:48700"/>
        <dbReference type="ChEBI" id="CHEBI:15377"/>
        <dbReference type="ChEBI" id="CHEBI:15378"/>
        <dbReference type="ChEBI" id="CHEBI:28868"/>
        <dbReference type="ChEBI" id="CHEBI:90477"/>
        <dbReference type="ChEBI" id="CHEBI:90770"/>
    </reaction>
    <physiologicalReaction direction="left-to-right" evidence="2">
        <dbReference type="Rhea" id="RHEA:48701"/>
    </physiologicalReaction>
</comment>
<comment type="catalytic activity">
    <reaction evidence="2">
        <text>1,2-dioctanoyl-3-O-beta-D-galactosyl-sn-glycerol + H2O = octanoyl-3-(beta-D-galactosyl)-sn-glycerol + octanoate + H(+)</text>
        <dbReference type="Rhea" id="RHEA:48696"/>
        <dbReference type="ChEBI" id="CHEBI:15377"/>
        <dbReference type="ChEBI" id="CHEBI:15378"/>
        <dbReference type="ChEBI" id="CHEBI:25646"/>
        <dbReference type="ChEBI" id="CHEBI:90453"/>
        <dbReference type="ChEBI" id="CHEBI:90769"/>
    </reaction>
    <physiologicalReaction direction="left-to-right" evidence="2">
        <dbReference type="Rhea" id="RHEA:48697"/>
    </physiologicalReaction>
</comment>
<comment type="catalytic activity">
    <reaction evidence="2">
        <text>1,2-didodecanoyl-3-beta-D-galactosyl-sn-glycerol + H2O = dodecanoyl-3-beta-D-galactosyl-sn-glycerol + dodecanoate + H(+)</text>
        <dbReference type="Rhea" id="RHEA:48540"/>
        <dbReference type="ChEBI" id="CHEBI:15377"/>
        <dbReference type="ChEBI" id="CHEBI:15378"/>
        <dbReference type="ChEBI" id="CHEBI:18262"/>
        <dbReference type="ChEBI" id="CHEBI:90340"/>
        <dbReference type="ChEBI" id="CHEBI:90515"/>
    </reaction>
    <physiologicalReaction direction="left-to-right" evidence="2">
        <dbReference type="Rhea" id="RHEA:48541"/>
    </physiologicalReaction>
</comment>
<comment type="catalytic activity">
    <reaction evidence="2">
        <text>1-beta-D-galactosyl-2,3-didodecanoyl-sn-glycerol + H2O = 1-beta-D-galactosyl-dodecanoyl-sn-glycerol + dodecanoate + H(+)</text>
        <dbReference type="Rhea" id="RHEA:48536"/>
        <dbReference type="ChEBI" id="CHEBI:15377"/>
        <dbReference type="ChEBI" id="CHEBI:15378"/>
        <dbReference type="ChEBI" id="CHEBI:18262"/>
        <dbReference type="ChEBI" id="CHEBI:90342"/>
        <dbReference type="ChEBI" id="CHEBI:90514"/>
    </reaction>
    <physiologicalReaction direction="left-to-right" evidence="2">
        <dbReference type="Rhea" id="RHEA:48537"/>
    </physiologicalReaction>
</comment>
<comment type="catalytic activity">
    <reaction evidence="2">
        <text>a 1,2-diacyl-3-O-[alpha-D-galactosyl-(1-&gt;6)-beta-D-galactosyl]-sn-glycerol + H2O = acyl-3-O-[alpha-D-galactosyl-(1-&gt;6)-beta-D-galactosyl]-sn-glycerol + a fatty acid + H(+)</text>
        <dbReference type="Rhea" id="RHEA:48372"/>
        <dbReference type="ChEBI" id="CHEBI:15377"/>
        <dbReference type="ChEBI" id="CHEBI:15378"/>
        <dbReference type="ChEBI" id="CHEBI:28396"/>
        <dbReference type="ChEBI" id="CHEBI:28868"/>
        <dbReference type="ChEBI" id="CHEBI:90310"/>
    </reaction>
    <physiologicalReaction direction="left-to-right" evidence="2">
        <dbReference type="Rhea" id="RHEA:48373"/>
    </physiologicalReaction>
</comment>
<comment type="catalytic activity">
    <reaction evidence="2">
        <text>long chain 1,2-diacyl-3-O-[alpha-D-galactosyl-(1-&gt;6)-beta-D-galactosyl]-sn-glycerol + H2O = long chain acyl-3-O-[alpha-D-galactosyl-(1-&gt;6)-beta-D-galactosyl]-sn-glycerol + a fatty acid + H(+)</text>
        <dbReference type="Rhea" id="RHEA:48708"/>
        <dbReference type="ChEBI" id="CHEBI:15377"/>
        <dbReference type="ChEBI" id="CHEBI:15378"/>
        <dbReference type="ChEBI" id="CHEBI:28868"/>
        <dbReference type="ChEBI" id="CHEBI:90463"/>
        <dbReference type="ChEBI" id="CHEBI:90774"/>
    </reaction>
    <physiologicalReaction direction="left-to-right" evidence="2">
        <dbReference type="Rhea" id="RHEA:48709"/>
    </physiologicalReaction>
</comment>
<comment type="catalytic activity">
    <reaction evidence="2">
        <text>1,2-dioctanoyl-3-O-[alpha-D-galactosyl-(1-&gt;6)-beta-D-galactosyl]-sn-glycerol + H2O = octanoyl-3-O-[alpha-D-galactosyl-(1-&gt;6)-beta-D-galactosyl]-sn-glycerol + octanoate + H(+)</text>
        <dbReference type="Rhea" id="RHEA:48692"/>
        <dbReference type="ChEBI" id="CHEBI:15377"/>
        <dbReference type="ChEBI" id="CHEBI:15378"/>
        <dbReference type="ChEBI" id="CHEBI:25646"/>
        <dbReference type="ChEBI" id="CHEBI:90457"/>
        <dbReference type="ChEBI" id="CHEBI:90768"/>
    </reaction>
    <physiologicalReaction direction="left-to-right" evidence="2">
        <dbReference type="Rhea" id="RHEA:48693"/>
    </physiologicalReaction>
</comment>
<comment type="catalytic activity">
    <reaction evidence="2">
        <text>1,2-didodecanoyl-3-O-[alpha-D-galactosyl-(1-&gt;6)-beta-D-galactosyl]-sn-glycerol + H2O = dodecanoyl-3-O-[alpha-D-galactosyl-(1-&gt;6)-beta-D-galactosyl]-sn-glycerol + dodecanoate + H(+)</text>
        <dbReference type="Rhea" id="RHEA:48516"/>
        <dbReference type="ChEBI" id="CHEBI:15377"/>
        <dbReference type="ChEBI" id="CHEBI:15378"/>
        <dbReference type="ChEBI" id="CHEBI:18262"/>
        <dbReference type="ChEBI" id="CHEBI:90337"/>
        <dbReference type="ChEBI" id="CHEBI:90359"/>
    </reaction>
    <physiologicalReaction direction="left-to-right" evidence="2">
        <dbReference type="Rhea" id="RHEA:48517"/>
    </physiologicalReaction>
</comment>
<comment type="catalytic activity">
    <reaction evidence="2">
        <text>a 1,2-diacyl-sn-glycero-3-phosphocholine + H2O = a monoacyl-sn-glycero-3-phosphocholine + a fatty acid + H(+)</text>
        <dbReference type="Rhea" id="RHEA:44664"/>
        <dbReference type="ChEBI" id="CHEBI:15377"/>
        <dbReference type="ChEBI" id="CHEBI:15378"/>
        <dbReference type="ChEBI" id="CHEBI:28868"/>
        <dbReference type="ChEBI" id="CHEBI:57643"/>
        <dbReference type="ChEBI" id="CHEBI:84465"/>
    </reaction>
    <physiologicalReaction direction="left-to-right" evidence="2">
        <dbReference type="Rhea" id="RHEA:44665"/>
    </physiologicalReaction>
</comment>
<comment type="pathway">
    <text evidence="2">Glycerolipid metabolism; triacylglycerol degradation.</text>
</comment>
<comment type="pathway">
    <text evidence="2">Glycolipid metabolism.</text>
</comment>
<comment type="subcellular location">
    <subcellularLocation>
        <location evidence="2">Secreted</location>
    </subcellularLocation>
    <subcellularLocation>
        <location evidence="3">Zymogen granule membrane</location>
        <topology evidence="3">Peripheral membrane protein</topology>
    </subcellularLocation>
    <subcellularLocation>
        <location evidence="3">Cell projection</location>
        <location evidence="3">Neuron projection</location>
    </subcellularLocation>
    <text evidence="3">Localizes to neurite tips in neuronal cells.</text>
</comment>
<comment type="similarity">
    <text evidence="7">Belongs to the AB hydrolase superfamily. Lipase family.</text>
</comment>
<keyword id="KW-0106">Calcium</keyword>
<keyword id="KW-0966">Cell projection</keyword>
<keyword id="KW-0968">Cytoplasmic vesicle</keyword>
<keyword id="KW-1015">Disulfide bond</keyword>
<keyword id="KW-0325">Glycoprotein</keyword>
<keyword id="KW-0378">Hydrolase</keyword>
<keyword id="KW-0442">Lipid degradation</keyword>
<keyword id="KW-0443">Lipid metabolism</keyword>
<keyword id="KW-0472">Membrane</keyword>
<keyword id="KW-0479">Metal-binding</keyword>
<keyword id="KW-1185">Reference proteome</keyword>
<keyword id="KW-0964">Secreted</keyword>
<keyword id="KW-0732">Signal</keyword>
<organism>
    <name type="scientific">Bos taurus</name>
    <name type="common">Bovine</name>
    <dbReference type="NCBI Taxonomy" id="9913"/>
    <lineage>
        <taxon>Eukaryota</taxon>
        <taxon>Metazoa</taxon>
        <taxon>Chordata</taxon>
        <taxon>Craniata</taxon>
        <taxon>Vertebrata</taxon>
        <taxon>Euteleostomi</taxon>
        <taxon>Mammalia</taxon>
        <taxon>Eutheria</taxon>
        <taxon>Laurasiatheria</taxon>
        <taxon>Artiodactyla</taxon>
        <taxon>Ruminantia</taxon>
        <taxon>Pecora</taxon>
        <taxon>Bovidae</taxon>
        <taxon>Bovinae</taxon>
        <taxon>Bos</taxon>
    </lineage>
</organism>
<feature type="signal peptide" evidence="4">
    <location>
        <begin position="1"/>
        <end position="17"/>
    </location>
</feature>
<feature type="chain" id="PRO_0000355143" description="Pancreatic lipase-related protein 2">
    <location>
        <begin position="18"/>
        <end position="469"/>
    </location>
</feature>
<feature type="domain" description="PLAT" evidence="5">
    <location>
        <begin position="357"/>
        <end position="469"/>
    </location>
</feature>
<feature type="region of interest" description="Required for galactolipase activity" evidence="2">
    <location>
        <begin position="93"/>
        <end position="105"/>
    </location>
</feature>
<feature type="region of interest" description="Required for galactolipase activity" evidence="2">
    <location>
        <begin position="257"/>
        <end position="279"/>
    </location>
</feature>
<feature type="active site" description="Nucleophile" evidence="2">
    <location>
        <position position="171"/>
    </location>
</feature>
<feature type="active site" description="Charge relay system" evidence="6">
    <location>
        <position position="195"/>
    </location>
</feature>
<feature type="active site" description="Charge relay system" evidence="6">
    <location>
        <position position="282"/>
    </location>
</feature>
<feature type="binding site" evidence="2">
    <location>
        <position position="206"/>
    </location>
    <ligand>
        <name>Ca(2+)</name>
        <dbReference type="ChEBI" id="CHEBI:29108"/>
    </ligand>
</feature>
<feature type="binding site" evidence="2">
    <location>
        <position position="209"/>
    </location>
    <ligand>
        <name>Ca(2+)</name>
        <dbReference type="ChEBI" id="CHEBI:29108"/>
    </ligand>
</feature>
<feature type="binding site" evidence="2">
    <location>
        <position position="211"/>
    </location>
    <ligand>
        <name>Ca(2+)</name>
        <dbReference type="ChEBI" id="CHEBI:29108"/>
    </ligand>
</feature>
<feature type="binding site" evidence="2">
    <location>
        <position position="214"/>
    </location>
    <ligand>
        <name>Ca(2+)</name>
        <dbReference type="ChEBI" id="CHEBI:29108"/>
    </ligand>
</feature>
<feature type="glycosylation site" description="N-linked (GlcNAc...) asparagine" evidence="4">
    <location>
        <position position="71"/>
    </location>
</feature>
<feature type="glycosylation site" description="N-linked (GlcNAc...) asparagine" evidence="2">
    <location>
        <position position="353"/>
    </location>
</feature>
<feature type="glycosylation site" description="N-linked (GlcNAc...) asparagine" evidence="4">
    <location>
        <position position="399"/>
    </location>
</feature>
<feature type="glycosylation site" description="N-linked (GlcNAc...) asparagine" evidence="4">
    <location>
        <position position="455"/>
    </location>
</feature>
<feature type="disulfide bond" evidence="5">
    <location>
        <begin position="21"/>
        <end position="27"/>
    </location>
</feature>
<feature type="disulfide bond" evidence="5">
    <location>
        <begin position="109"/>
        <end position="120"/>
    </location>
</feature>
<feature type="disulfide bond" evidence="5">
    <location>
        <begin position="256"/>
        <end position="280"/>
    </location>
</feature>
<feature type="disulfide bond" evidence="5">
    <location>
        <begin position="304"/>
        <end position="315"/>
    </location>
</feature>
<feature type="disulfide bond" evidence="5">
    <location>
        <begin position="318"/>
        <end position="323"/>
    </location>
</feature>
<feature type="disulfide bond" evidence="5">
    <location>
        <begin position="453"/>
        <end position="469"/>
    </location>
</feature>
<gene>
    <name evidence="2" type="primary">PNLIPRP2</name>
</gene>
<proteinExistence type="evidence at transcript level"/>
<evidence type="ECO:0000250" key="1">
    <source>
        <dbReference type="UniProtKB" id="P17892"/>
    </source>
</evidence>
<evidence type="ECO:0000250" key="2">
    <source>
        <dbReference type="UniProtKB" id="P54317"/>
    </source>
</evidence>
<evidence type="ECO:0000250" key="3">
    <source>
        <dbReference type="UniProtKB" id="P54318"/>
    </source>
</evidence>
<evidence type="ECO:0000255" key="4"/>
<evidence type="ECO:0000255" key="5">
    <source>
        <dbReference type="PROSITE-ProRule" id="PRU00152"/>
    </source>
</evidence>
<evidence type="ECO:0000255" key="6">
    <source>
        <dbReference type="PROSITE-ProRule" id="PRU10037"/>
    </source>
</evidence>
<evidence type="ECO:0000305" key="7"/>
<reference key="1">
    <citation type="submission" date="2007-06" db="EMBL/GenBank/DDBJ databases">
        <authorList>
            <consortium name="NIH - Mammalian Gene Collection (MGC) project"/>
        </authorList>
    </citation>
    <scope>NUCLEOTIDE SEQUENCE [LARGE SCALE MRNA]</scope>
    <source>
        <strain>Hereford</strain>
        <tissue>Fetal pancreas</tissue>
    </source>
</reference>